<name>TRUB_BACCN</name>
<proteinExistence type="inferred from homology"/>
<sequence length="307" mass="34589">MEGVVLLHKPKGMTSHDCVFKLRKILREKRIGHTGTLDPDVTGVLPICVGRATKIAQFLTSETKTYEGEVTLGFSTTTEDASGEVVEKQDVNRTITRKEIEAVLAELTGTLEQVPPMYSAVKVNGKKLYEYARAGQEVKRPVRIITIHEFTLLDNRETFEGANISFRFRVTCSKGTYVRTLAVMIGEKLGFPAHMSDLVRTASGEFQLHDCVSFEEIEENMQNGTVESVFISIDEALSKFPKIVVDEKQAEKIKNGMFLKNEIQAETPFITVFDRNNHCLAIYEHHPKRPGMLKPMKVLVNNQELKL</sequence>
<keyword id="KW-0413">Isomerase</keyword>
<keyword id="KW-0819">tRNA processing</keyword>
<organism>
    <name type="scientific">Bacillus cytotoxicus (strain DSM 22905 / CIP 110041 / 391-98 / NVH 391-98)</name>
    <dbReference type="NCBI Taxonomy" id="315749"/>
    <lineage>
        <taxon>Bacteria</taxon>
        <taxon>Bacillati</taxon>
        <taxon>Bacillota</taxon>
        <taxon>Bacilli</taxon>
        <taxon>Bacillales</taxon>
        <taxon>Bacillaceae</taxon>
        <taxon>Bacillus</taxon>
        <taxon>Bacillus cereus group</taxon>
    </lineage>
</organism>
<evidence type="ECO:0000255" key="1">
    <source>
        <dbReference type="HAMAP-Rule" id="MF_01080"/>
    </source>
</evidence>
<comment type="function">
    <text evidence="1">Responsible for synthesis of pseudouridine from uracil-55 in the psi GC loop of transfer RNAs.</text>
</comment>
<comment type="catalytic activity">
    <reaction evidence="1">
        <text>uridine(55) in tRNA = pseudouridine(55) in tRNA</text>
        <dbReference type="Rhea" id="RHEA:42532"/>
        <dbReference type="Rhea" id="RHEA-COMP:10101"/>
        <dbReference type="Rhea" id="RHEA-COMP:10102"/>
        <dbReference type="ChEBI" id="CHEBI:65314"/>
        <dbReference type="ChEBI" id="CHEBI:65315"/>
        <dbReference type="EC" id="5.4.99.25"/>
    </reaction>
</comment>
<comment type="similarity">
    <text evidence="1">Belongs to the pseudouridine synthase TruB family. Type 1 subfamily.</text>
</comment>
<dbReference type="EC" id="5.4.99.25" evidence="1"/>
<dbReference type="EMBL" id="CP000764">
    <property type="protein sequence ID" value="ABS22698.1"/>
    <property type="molecule type" value="Genomic_DNA"/>
</dbReference>
<dbReference type="RefSeq" id="WP_012094902.1">
    <property type="nucleotide sequence ID" value="NC_009674.1"/>
</dbReference>
<dbReference type="SMR" id="A7GRE0"/>
<dbReference type="STRING" id="315749.Bcer98_2462"/>
<dbReference type="GeneID" id="33897717"/>
<dbReference type="KEGG" id="bcy:Bcer98_2462"/>
<dbReference type="eggNOG" id="COG0130">
    <property type="taxonomic scope" value="Bacteria"/>
</dbReference>
<dbReference type="HOGENOM" id="CLU_032087_0_1_9"/>
<dbReference type="OrthoDB" id="9802309at2"/>
<dbReference type="Proteomes" id="UP000002300">
    <property type="component" value="Chromosome"/>
</dbReference>
<dbReference type="GO" id="GO:0003723">
    <property type="term" value="F:RNA binding"/>
    <property type="evidence" value="ECO:0007669"/>
    <property type="project" value="InterPro"/>
</dbReference>
<dbReference type="GO" id="GO:0160148">
    <property type="term" value="F:tRNA pseudouridine(55) synthase activity"/>
    <property type="evidence" value="ECO:0007669"/>
    <property type="project" value="UniProtKB-EC"/>
</dbReference>
<dbReference type="GO" id="GO:1990481">
    <property type="term" value="P:mRNA pseudouridine synthesis"/>
    <property type="evidence" value="ECO:0007669"/>
    <property type="project" value="TreeGrafter"/>
</dbReference>
<dbReference type="GO" id="GO:0031119">
    <property type="term" value="P:tRNA pseudouridine synthesis"/>
    <property type="evidence" value="ECO:0007669"/>
    <property type="project" value="UniProtKB-UniRule"/>
</dbReference>
<dbReference type="CDD" id="cd02573">
    <property type="entry name" value="PseudoU_synth_EcTruB"/>
    <property type="match status" value="1"/>
</dbReference>
<dbReference type="FunFam" id="3.30.2350.10:FF:000011">
    <property type="entry name" value="tRNA pseudouridine synthase B"/>
    <property type="match status" value="1"/>
</dbReference>
<dbReference type="Gene3D" id="3.30.2350.10">
    <property type="entry name" value="Pseudouridine synthase"/>
    <property type="match status" value="1"/>
</dbReference>
<dbReference type="HAMAP" id="MF_01080">
    <property type="entry name" value="TruB_bact"/>
    <property type="match status" value="1"/>
</dbReference>
<dbReference type="InterPro" id="IPR020103">
    <property type="entry name" value="PsdUridine_synth_cat_dom_sf"/>
</dbReference>
<dbReference type="InterPro" id="IPR002501">
    <property type="entry name" value="PsdUridine_synth_N"/>
</dbReference>
<dbReference type="InterPro" id="IPR014780">
    <property type="entry name" value="tRNA_psdUridine_synth_TruB"/>
</dbReference>
<dbReference type="InterPro" id="IPR032819">
    <property type="entry name" value="TruB_C"/>
</dbReference>
<dbReference type="NCBIfam" id="TIGR00431">
    <property type="entry name" value="TruB"/>
    <property type="match status" value="1"/>
</dbReference>
<dbReference type="PANTHER" id="PTHR13767:SF2">
    <property type="entry name" value="PSEUDOURIDYLATE SYNTHASE TRUB1"/>
    <property type="match status" value="1"/>
</dbReference>
<dbReference type="PANTHER" id="PTHR13767">
    <property type="entry name" value="TRNA-PSEUDOURIDINE SYNTHASE"/>
    <property type="match status" value="1"/>
</dbReference>
<dbReference type="Pfam" id="PF16198">
    <property type="entry name" value="TruB_C_2"/>
    <property type="match status" value="1"/>
</dbReference>
<dbReference type="Pfam" id="PF01509">
    <property type="entry name" value="TruB_N"/>
    <property type="match status" value="1"/>
</dbReference>
<dbReference type="SUPFAM" id="SSF55120">
    <property type="entry name" value="Pseudouridine synthase"/>
    <property type="match status" value="1"/>
</dbReference>
<accession>A7GRE0</accession>
<reference key="1">
    <citation type="journal article" date="2008" name="Chem. Biol. Interact.">
        <title>Extending the Bacillus cereus group genomics to putative food-borne pathogens of different toxicity.</title>
        <authorList>
            <person name="Lapidus A."/>
            <person name="Goltsman E."/>
            <person name="Auger S."/>
            <person name="Galleron N."/>
            <person name="Segurens B."/>
            <person name="Dossat C."/>
            <person name="Land M.L."/>
            <person name="Broussolle V."/>
            <person name="Brillard J."/>
            <person name="Guinebretiere M.-H."/>
            <person name="Sanchis V."/>
            <person name="Nguen-the C."/>
            <person name="Lereclus D."/>
            <person name="Richardson P."/>
            <person name="Wincker P."/>
            <person name="Weissenbach J."/>
            <person name="Ehrlich S.D."/>
            <person name="Sorokin A."/>
        </authorList>
    </citation>
    <scope>NUCLEOTIDE SEQUENCE [LARGE SCALE GENOMIC DNA]</scope>
    <source>
        <strain>DSM 22905 / CIP 110041 / 391-98 / NVH 391-98</strain>
    </source>
</reference>
<feature type="chain" id="PRO_1000084548" description="tRNA pseudouridine synthase B">
    <location>
        <begin position="1"/>
        <end position="307"/>
    </location>
</feature>
<feature type="active site" description="Nucleophile" evidence="1">
    <location>
        <position position="38"/>
    </location>
</feature>
<gene>
    <name evidence="1" type="primary">truB</name>
    <name type="ordered locus">Bcer98_2462</name>
</gene>
<protein>
    <recommendedName>
        <fullName evidence="1">tRNA pseudouridine synthase B</fullName>
        <ecNumber evidence="1">5.4.99.25</ecNumber>
    </recommendedName>
    <alternativeName>
        <fullName evidence="1">tRNA pseudouridine(55) synthase</fullName>
        <shortName evidence="1">Psi55 synthase</shortName>
    </alternativeName>
    <alternativeName>
        <fullName evidence="1">tRNA pseudouridylate synthase</fullName>
    </alternativeName>
    <alternativeName>
        <fullName evidence="1">tRNA-uridine isomerase</fullName>
    </alternativeName>
</protein>